<organism>
    <name type="scientific">Streptococcus pneumoniae (strain CGSP14)</name>
    <dbReference type="NCBI Taxonomy" id="516950"/>
    <lineage>
        <taxon>Bacteria</taxon>
        <taxon>Bacillati</taxon>
        <taxon>Bacillota</taxon>
        <taxon>Bacilli</taxon>
        <taxon>Lactobacillales</taxon>
        <taxon>Streptococcaceae</taxon>
        <taxon>Streptococcus</taxon>
    </lineage>
</organism>
<name>GALT_STRPS</name>
<accession>B2ISV1</accession>
<evidence type="ECO:0000255" key="1">
    <source>
        <dbReference type="HAMAP-Rule" id="MF_00571"/>
    </source>
</evidence>
<dbReference type="EC" id="2.7.7.12" evidence="1"/>
<dbReference type="EMBL" id="CP001033">
    <property type="protein sequence ID" value="ACB91078.1"/>
    <property type="molecule type" value="Genomic_DNA"/>
</dbReference>
<dbReference type="RefSeq" id="WP_000176993.1">
    <property type="nucleotide sequence ID" value="NC_010582.1"/>
</dbReference>
<dbReference type="KEGG" id="spw:SPCG_1826"/>
<dbReference type="HOGENOM" id="CLU_047799_0_0_9"/>
<dbReference type="UniPathway" id="UPA00214"/>
<dbReference type="GO" id="GO:0005737">
    <property type="term" value="C:cytoplasm"/>
    <property type="evidence" value="ECO:0007669"/>
    <property type="project" value="UniProtKB-SubCell"/>
</dbReference>
<dbReference type="GO" id="GO:0008108">
    <property type="term" value="F:UDP-glucose:hexose-1-phosphate uridylyltransferase activity"/>
    <property type="evidence" value="ECO:0007669"/>
    <property type="project" value="UniProtKB-UniRule"/>
</dbReference>
<dbReference type="GO" id="GO:0006012">
    <property type="term" value="P:galactose metabolic process"/>
    <property type="evidence" value="ECO:0007669"/>
    <property type="project" value="UniProtKB-UniRule"/>
</dbReference>
<dbReference type="HAMAP" id="MF_00571">
    <property type="entry name" value="GalP_UDP_trans"/>
    <property type="match status" value="1"/>
</dbReference>
<dbReference type="InterPro" id="IPR000766">
    <property type="entry name" value="GalP_uridyl_Trfase_II"/>
</dbReference>
<dbReference type="InterPro" id="IPR023425">
    <property type="entry name" value="GalP_uridyl_Trfase_II_CS"/>
</dbReference>
<dbReference type="InterPro" id="IPR005850">
    <property type="entry name" value="GalP_Utransf_C"/>
</dbReference>
<dbReference type="InterPro" id="IPR005849">
    <property type="entry name" value="GalP_Utransf_N"/>
</dbReference>
<dbReference type="NCBIfam" id="TIGR01239">
    <property type="entry name" value="galT_2"/>
    <property type="match status" value="1"/>
</dbReference>
<dbReference type="NCBIfam" id="NF003628">
    <property type="entry name" value="PRK05270.1-1"/>
    <property type="match status" value="1"/>
</dbReference>
<dbReference type="NCBIfam" id="NF003629">
    <property type="entry name" value="PRK05270.1-2"/>
    <property type="match status" value="1"/>
</dbReference>
<dbReference type="NCBIfam" id="NF003631">
    <property type="entry name" value="PRK05270.1-5"/>
    <property type="match status" value="1"/>
</dbReference>
<dbReference type="NCBIfam" id="NF003633">
    <property type="entry name" value="PRK05270.2-2"/>
    <property type="match status" value="1"/>
</dbReference>
<dbReference type="PANTHER" id="PTHR39191:SF1">
    <property type="entry name" value="DUF4922 DOMAIN-CONTAINING PROTEIN"/>
    <property type="match status" value="1"/>
</dbReference>
<dbReference type="PANTHER" id="PTHR39191">
    <property type="entry name" value="GALACTOSE-1-PHOSPHATE URIDYLYLTRANSFERASE"/>
    <property type="match status" value="1"/>
</dbReference>
<dbReference type="Pfam" id="PF02744">
    <property type="entry name" value="GalP_UDP_tr_C"/>
    <property type="match status" value="1"/>
</dbReference>
<dbReference type="Pfam" id="PF01087">
    <property type="entry name" value="GalP_UDP_transf"/>
    <property type="match status" value="1"/>
</dbReference>
<dbReference type="PIRSF" id="PIRSF006005">
    <property type="entry name" value="GalT_BS"/>
    <property type="match status" value="1"/>
</dbReference>
<dbReference type="PROSITE" id="PS01163">
    <property type="entry name" value="GAL_P_UDP_TRANSF_II"/>
    <property type="match status" value="1"/>
</dbReference>
<reference key="1">
    <citation type="journal article" date="2009" name="BMC Genomics">
        <title>Genome evolution driven by host adaptations results in a more virulent and antimicrobial-resistant Streptococcus pneumoniae serotype 14.</title>
        <authorList>
            <person name="Ding F."/>
            <person name="Tang P."/>
            <person name="Hsu M.-H."/>
            <person name="Cui P."/>
            <person name="Hu S."/>
            <person name="Yu J."/>
            <person name="Chiu C.-H."/>
        </authorList>
    </citation>
    <scope>NUCLEOTIDE SEQUENCE [LARGE SCALE GENOMIC DNA]</scope>
    <source>
        <strain>CGSP14</strain>
    </source>
</reference>
<keyword id="KW-0119">Carbohydrate metabolism</keyword>
<keyword id="KW-0963">Cytoplasm</keyword>
<keyword id="KW-0299">Galactose metabolism</keyword>
<keyword id="KW-0548">Nucleotidyltransferase</keyword>
<keyword id="KW-0808">Transferase</keyword>
<proteinExistence type="inferred from homology"/>
<protein>
    <recommendedName>
        <fullName evidence="1">Galactose-1-phosphate uridylyltransferase</fullName>
        <shortName evidence="1">Gal-1-P uridylyltransferase</shortName>
        <ecNumber evidence="1">2.7.7.12</ecNumber>
    </recommendedName>
    <alternativeName>
        <fullName evidence="1">UDP-glucose--hexose-1-phosphate uridylyltransferase</fullName>
    </alternativeName>
</protein>
<gene>
    <name evidence="1" type="primary">galT</name>
    <name type="ordered locus">SPCG_1826</name>
</gene>
<feature type="chain" id="PRO_1000129496" description="Galactose-1-phosphate uridylyltransferase">
    <location>
        <begin position="1"/>
        <end position="493"/>
    </location>
</feature>
<comment type="catalytic activity">
    <reaction evidence="1">
        <text>alpha-D-galactose 1-phosphate + UDP-alpha-D-glucose = alpha-D-glucose 1-phosphate + UDP-alpha-D-galactose</text>
        <dbReference type="Rhea" id="RHEA:13989"/>
        <dbReference type="ChEBI" id="CHEBI:58336"/>
        <dbReference type="ChEBI" id="CHEBI:58601"/>
        <dbReference type="ChEBI" id="CHEBI:58885"/>
        <dbReference type="ChEBI" id="CHEBI:66914"/>
        <dbReference type="EC" id="2.7.7.12"/>
    </reaction>
</comment>
<comment type="pathway">
    <text evidence="1">Carbohydrate metabolism; galactose metabolism.</text>
</comment>
<comment type="subcellular location">
    <subcellularLocation>
        <location evidence="1">Cytoplasm</location>
    </subcellularLocation>
</comment>
<comment type="similarity">
    <text evidence="1">Belongs to the galactose-1-phosphate uridylyltransferase type 2 family.</text>
</comment>
<sequence>MTLVDKFVTHVISESSFEEMDRIYLTNRVLARVGEGVLEVETNLDKLIDLKDQLVEEAVRLETIEDSQTAREILGTELMDLVTPCPSQVNRDFWEAYAYSPEQAIEDFYQLSQKNDYIKLKAIAKNIAYRVPSDYGELEITINLSKPEKDPKEIAVAKLVQASNYPQCQLCLENEGYHGRVNHPARSNHRIIRFEMVGQEWGFQYSPYAYFNEHCIFLDGQHRPMAISRQSFERLLAIVEQFPGYFAGSNADLPIVGGSILTHDHYQGGRHVFPMELAPLQKTFRFAGFEQVKAGIIKWPMSVLRLTSDSKEDLINLADKIFQEWRQYSDSSVQILAETDGTPHHTITPIARKRDGQFELDLVLRDNQTSAEHPDGIYHPHKDVQHIKKENIGLIEVMGLAILPPRLKEEVEQVASYLVGEAVTVADYHQEWADQLKSQHPDLTDKEKALAIVKDSVGAIFVRVLEDAGVYKQTEQGQTAFMRFVEQVGISLD</sequence>